<organism>
    <name type="scientific">Eremothecium gossypii (strain ATCC 10895 / CBS 109.51 / FGSC 9923 / NRRL Y-1056)</name>
    <name type="common">Yeast</name>
    <name type="synonym">Ashbya gossypii</name>
    <dbReference type="NCBI Taxonomy" id="284811"/>
    <lineage>
        <taxon>Eukaryota</taxon>
        <taxon>Fungi</taxon>
        <taxon>Dikarya</taxon>
        <taxon>Ascomycota</taxon>
        <taxon>Saccharomycotina</taxon>
        <taxon>Saccharomycetes</taxon>
        <taxon>Saccharomycetales</taxon>
        <taxon>Saccharomycetaceae</taxon>
        <taxon>Eremothecium</taxon>
    </lineage>
</organism>
<accession>Q75CF5</accession>
<name>GET2_EREGS</name>
<gene>
    <name evidence="1" type="primary">GET2</name>
    <name type="ordered locus">ACL036W</name>
</gene>
<sequence length="289" mass="31959">MSEVSEAEKRRILREKRKQKFSKGAGSARLHKITTQQPGGASGDSTVTSAEISDNEGSLQRGSNSGQSTREIDDLLAAMDPPIEPAEPLESAAPEVAFIQQLMKMQQGSATPPADEKAGGLFSPLLERLAEQEAGGAPVVSGEVGVHQFQVRQLKAYMLLLRWAILLPFIYYVMHPGTAHWLHTSRFLHFVMEPRNFFMVFTTFEVASISIYYQVLLTLERTNKVNSLSYSSKLVTWAGLVPDGMLPIDNLQGKVVVALHYWDILSMYLTDLSLCLVAAGLMKYYHAAP</sequence>
<feature type="chain" id="PRO_0000388624" description="Golgi to ER traffic protein 2">
    <location>
        <begin position="1"/>
        <end position="289"/>
    </location>
</feature>
<feature type="topological domain" description="Cytoplasmic" evidence="1">
    <location>
        <begin position="1"/>
        <end position="153"/>
    </location>
</feature>
<feature type="transmembrane region" description="Helical" evidence="1">
    <location>
        <begin position="154"/>
        <end position="173"/>
    </location>
</feature>
<feature type="topological domain" description="Lumenal" evidence="1">
    <location>
        <begin position="174"/>
        <end position="196"/>
    </location>
</feature>
<feature type="transmembrane region" description="Helical" evidence="1">
    <location>
        <begin position="197"/>
        <end position="216"/>
    </location>
</feature>
<feature type="topological domain" description="Cytoplasmic" evidence="1">
    <location>
        <begin position="217"/>
        <end position="263"/>
    </location>
</feature>
<feature type="transmembrane region" description="Helical" evidence="1">
    <location>
        <begin position="264"/>
        <end position="284"/>
    </location>
</feature>
<feature type="topological domain" description="Lumenal" evidence="1">
    <location>
        <begin position="285"/>
        <end position="289"/>
    </location>
</feature>
<feature type="region of interest" description="Disordered" evidence="2">
    <location>
        <begin position="1"/>
        <end position="68"/>
    </location>
</feature>
<feature type="compositionally biased region" description="Basic and acidic residues" evidence="2">
    <location>
        <begin position="1"/>
        <end position="10"/>
    </location>
</feature>
<feature type="compositionally biased region" description="Basic residues" evidence="2">
    <location>
        <begin position="11"/>
        <end position="21"/>
    </location>
</feature>
<feature type="compositionally biased region" description="Polar residues" evidence="2">
    <location>
        <begin position="33"/>
        <end position="68"/>
    </location>
</feature>
<reference key="1">
    <citation type="journal article" date="2004" name="Science">
        <title>The Ashbya gossypii genome as a tool for mapping the ancient Saccharomyces cerevisiae genome.</title>
        <authorList>
            <person name="Dietrich F.S."/>
            <person name="Voegeli S."/>
            <person name="Brachat S."/>
            <person name="Lerch A."/>
            <person name="Gates K."/>
            <person name="Steiner S."/>
            <person name="Mohr C."/>
            <person name="Poehlmann R."/>
            <person name="Luedi P."/>
            <person name="Choi S."/>
            <person name="Wing R.A."/>
            <person name="Flavier A."/>
            <person name="Gaffney T.D."/>
            <person name="Philippsen P."/>
        </authorList>
    </citation>
    <scope>NUCLEOTIDE SEQUENCE [LARGE SCALE GENOMIC DNA]</scope>
    <source>
        <strain>ATCC 10895 / CBS 109.51 / FGSC 9923 / NRRL Y-1056</strain>
    </source>
</reference>
<reference key="2">
    <citation type="journal article" date="2013" name="G3 (Bethesda)">
        <title>Genomes of Ashbya fungi isolated from insects reveal four mating-type loci, numerous translocations, lack of transposons, and distinct gene duplications.</title>
        <authorList>
            <person name="Dietrich F.S."/>
            <person name="Voegeli S."/>
            <person name="Kuo S."/>
            <person name="Philippsen P."/>
        </authorList>
    </citation>
    <scope>GENOME REANNOTATION</scope>
    <source>
        <strain>ATCC 10895 / CBS 109.51 / FGSC 9923 / NRRL Y-1056</strain>
    </source>
</reference>
<comment type="function">
    <text evidence="1">Required for the post-translational delivery of tail-anchored (TA) proteins to the endoplasmic reticulum. Together with GET1, acts as a membrane receptor for soluble GET3, which recognizes and selectively binds the transmembrane domain of TA proteins in the cytosol. The GET complex cooperates with the HDEL receptor ERD2 to mediate the ATP-dependent retrieval of resident ER proteins that contain a C-terminal H-D-E-L retention signal from the Golgi to the ER.</text>
</comment>
<comment type="subunit">
    <text evidence="1">Component of the Golgi to ER traffic (GET) complex, which is composed of GET1, GET2 and GET3. Within the complex, GET1 and GET2 form a heterotetramer which is stabilized by phosphatidylinositol binding and which binds to the GET3 homodimer.</text>
</comment>
<comment type="subcellular location">
    <subcellularLocation>
        <location evidence="1">Endoplasmic reticulum membrane</location>
        <topology evidence="1">Multi-pass membrane protein</topology>
    </subcellularLocation>
    <subcellularLocation>
        <location evidence="1">Golgi apparatus membrane</location>
        <topology evidence="1">Multi-pass membrane protein</topology>
    </subcellularLocation>
</comment>
<comment type="similarity">
    <text evidence="1">Belongs to the GET2 family.</text>
</comment>
<protein>
    <recommendedName>
        <fullName evidence="1">Golgi to ER traffic protein 2</fullName>
    </recommendedName>
</protein>
<dbReference type="EMBL" id="AE016816">
    <property type="protein sequence ID" value="AAS51192.1"/>
    <property type="molecule type" value="Genomic_DNA"/>
</dbReference>
<dbReference type="RefSeq" id="NP_983368.1">
    <property type="nucleotide sequence ID" value="NM_208721.1"/>
</dbReference>
<dbReference type="SMR" id="Q75CF5"/>
<dbReference type="FunCoup" id="Q75CF5">
    <property type="interactions" value="70"/>
</dbReference>
<dbReference type="STRING" id="284811.Q75CF5"/>
<dbReference type="EnsemblFungi" id="AAS51192">
    <property type="protein sequence ID" value="AAS51192"/>
    <property type="gene ID" value="AGOS_ACL036W"/>
</dbReference>
<dbReference type="GeneID" id="4619493"/>
<dbReference type="KEGG" id="ago:AGOS_ACL036W"/>
<dbReference type="eggNOG" id="ENOG502QW0H">
    <property type="taxonomic scope" value="Eukaryota"/>
</dbReference>
<dbReference type="HOGENOM" id="CLU_066477_0_0_1"/>
<dbReference type="InParanoid" id="Q75CF5"/>
<dbReference type="OMA" id="QYWDVLS"/>
<dbReference type="OrthoDB" id="4097053at2759"/>
<dbReference type="Proteomes" id="UP000000591">
    <property type="component" value="Chromosome III"/>
</dbReference>
<dbReference type="GO" id="GO:0005789">
    <property type="term" value="C:endoplasmic reticulum membrane"/>
    <property type="evidence" value="ECO:0007669"/>
    <property type="project" value="UniProtKB-SubCell"/>
</dbReference>
<dbReference type="GO" id="GO:0043529">
    <property type="term" value="C:GET complex"/>
    <property type="evidence" value="ECO:0007669"/>
    <property type="project" value="UniProtKB-UniRule"/>
</dbReference>
<dbReference type="GO" id="GO:0000139">
    <property type="term" value="C:Golgi membrane"/>
    <property type="evidence" value="ECO:0007669"/>
    <property type="project" value="UniProtKB-SubCell"/>
</dbReference>
<dbReference type="GO" id="GO:0032977">
    <property type="term" value="F:membrane insertase activity"/>
    <property type="evidence" value="ECO:0007669"/>
    <property type="project" value="EnsemblFungi"/>
</dbReference>
<dbReference type="GO" id="GO:0008320">
    <property type="term" value="F:protein transmembrane transporter activity"/>
    <property type="evidence" value="ECO:0007669"/>
    <property type="project" value="EnsemblFungi"/>
</dbReference>
<dbReference type="GO" id="GO:0043495">
    <property type="term" value="F:protein-membrane adaptor activity"/>
    <property type="evidence" value="ECO:0007669"/>
    <property type="project" value="EnsemblFungi"/>
</dbReference>
<dbReference type="GO" id="GO:0097051">
    <property type="term" value="P:establishment of protein localization to endoplasmic reticulum membrane"/>
    <property type="evidence" value="ECO:0007669"/>
    <property type="project" value="EnsemblFungi"/>
</dbReference>
<dbReference type="GO" id="GO:0000423">
    <property type="term" value="P:mitophagy"/>
    <property type="evidence" value="ECO:0007669"/>
    <property type="project" value="EnsemblFungi"/>
</dbReference>
<dbReference type="GO" id="GO:0006890">
    <property type="term" value="P:retrograde vesicle-mediated transport, Golgi to endoplasmic reticulum"/>
    <property type="evidence" value="ECO:0000318"/>
    <property type="project" value="GO_Central"/>
</dbReference>
<dbReference type="GO" id="GO:0071816">
    <property type="term" value="P:tail-anchored membrane protein insertion into ER membrane"/>
    <property type="evidence" value="ECO:0007669"/>
    <property type="project" value="EnsemblFungi"/>
</dbReference>
<dbReference type="HAMAP" id="MF_03114">
    <property type="entry name" value="Get2"/>
    <property type="match status" value="1"/>
</dbReference>
<dbReference type="InterPro" id="IPR014802">
    <property type="entry name" value="GET2"/>
</dbReference>
<dbReference type="InterPro" id="IPR028143">
    <property type="entry name" value="Get2/sif1"/>
</dbReference>
<dbReference type="PANTHER" id="PTHR28263">
    <property type="entry name" value="GOLGI TO ER TRAFFIC PROTEIN 2"/>
    <property type="match status" value="1"/>
</dbReference>
<dbReference type="PANTHER" id="PTHR28263:SF1">
    <property type="entry name" value="GOLGI TO ER TRAFFIC PROTEIN 2"/>
    <property type="match status" value="1"/>
</dbReference>
<dbReference type="Pfam" id="PF08690">
    <property type="entry name" value="GET2"/>
    <property type="match status" value="1"/>
</dbReference>
<proteinExistence type="inferred from homology"/>
<evidence type="ECO:0000255" key="1">
    <source>
        <dbReference type="HAMAP-Rule" id="MF_03114"/>
    </source>
</evidence>
<evidence type="ECO:0000256" key="2">
    <source>
        <dbReference type="SAM" id="MobiDB-lite"/>
    </source>
</evidence>
<keyword id="KW-0256">Endoplasmic reticulum</keyword>
<keyword id="KW-0931">ER-Golgi transport</keyword>
<keyword id="KW-0333">Golgi apparatus</keyword>
<keyword id="KW-0472">Membrane</keyword>
<keyword id="KW-1185">Reference proteome</keyword>
<keyword id="KW-0812">Transmembrane</keyword>
<keyword id="KW-1133">Transmembrane helix</keyword>
<keyword id="KW-0813">Transport</keyword>